<organism>
    <name type="scientific">Mycobacterium phage L5</name>
    <name type="common">Mycobacteriophage L5</name>
    <dbReference type="NCBI Taxonomy" id="31757"/>
    <lineage>
        <taxon>Viruses</taxon>
        <taxon>Duplodnaviria</taxon>
        <taxon>Heunggongvirae</taxon>
        <taxon>Uroviricota</taxon>
        <taxon>Caudoviricetes</taxon>
        <taxon>Fromanvirus</taxon>
    </lineage>
</organism>
<keyword id="KW-1185">Reference proteome</keyword>
<organismHost>
    <name type="scientific">Mycobacterium</name>
    <dbReference type="NCBI Taxonomy" id="1763"/>
</organismHost>
<name>VG40_BPML5</name>
<protein>
    <recommendedName>
        <fullName>Gene 40 protein</fullName>
    </recommendedName>
    <alternativeName>
        <fullName>Gp40</fullName>
    </alternativeName>
</protein>
<feature type="chain" id="PRO_0000164764" description="Gene 40 protein">
    <location>
        <begin position="1"/>
        <end position="37"/>
    </location>
</feature>
<sequence>MDEDDWDDYDYGTYECGCCTCCGCTCYYDEWDEEDDL</sequence>
<dbReference type="EMBL" id="Z18946">
    <property type="protein sequence ID" value="CAA79416.1"/>
    <property type="molecule type" value="Genomic_DNA"/>
</dbReference>
<dbReference type="PIR" id="S30985">
    <property type="entry name" value="S30985"/>
</dbReference>
<dbReference type="RefSeq" id="NP_039704.1">
    <property type="nucleotide sequence ID" value="NC_001335.1"/>
</dbReference>
<dbReference type="GeneID" id="2942955"/>
<dbReference type="KEGG" id="vg:2942955"/>
<dbReference type="Proteomes" id="UP000002123">
    <property type="component" value="Genome"/>
</dbReference>
<proteinExistence type="predicted"/>
<accession>Q05250</accession>
<gene>
    <name type="primary">40</name>
</gene>
<reference key="1">
    <citation type="journal article" date="1993" name="Mol. Microbiol.">
        <title>DNA sequence, structure and gene expression of mycobacteriophage L5: a phage system for mycobacterial genetics.</title>
        <authorList>
            <person name="Hatfull G.F."/>
            <person name="Sarkis G.J."/>
        </authorList>
    </citation>
    <scope>NUCLEOTIDE SEQUENCE [LARGE SCALE GENOMIC DNA]</scope>
</reference>